<dbReference type="EMBL" id="AF326351">
    <property type="protein sequence ID" value="AAK00956.1"/>
    <property type="molecule type" value="mRNA"/>
</dbReference>
<dbReference type="EMBL" id="BC010052">
    <property type="protein sequence ID" value="AAH10052.1"/>
    <property type="molecule type" value="mRNA"/>
</dbReference>
<dbReference type="EMBL" id="BC063393">
    <property type="protein sequence ID" value="AAH63393.1"/>
    <property type="molecule type" value="mRNA"/>
</dbReference>
<dbReference type="CCDS" id="CCDS7881.1"/>
<dbReference type="RefSeq" id="NP_076986.1">
    <property type="nucleotide sequence ID" value="NM_024081.6"/>
</dbReference>
<dbReference type="RefSeq" id="XP_006718377.1">
    <property type="nucleotide sequence ID" value="XM_006718314.4"/>
</dbReference>
<dbReference type="SMR" id="Q9BZD6"/>
<dbReference type="BioGRID" id="122514">
    <property type="interactions" value="39"/>
</dbReference>
<dbReference type="FunCoup" id="Q9BZD6">
    <property type="interactions" value="326"/>
</dbReference>
<dbReference type="IntAct" id="Q9BZD6">
    <property type="interactions" value="37"/>
</dbReference>
<dbReference type="STRING" id="9606.ENSP00000257836"/>
<dbReference type="iPTMnet" id="Q9BZD6"/>
<dbReference type="PhosphoSitePlus" id="Q9BZD6"/>
<dbReference type="BioMuta" id="PRRG4"/>
<dbReference type="DMDM" id="20140760"/>
<dbReference type="jPOST" id="Q9BZD6"/>
<dbReference type="MassIVE" id="Q9BZD6"/>
<dbReference type="PaxDb" id="9606-ENSP00000257836"/>
<dbReference type="PeptideAtlas" id="Q9BZD6"/>
<dbReference type="ProteomicsDB" id="79816"/>
<dbReference type="Antibodypedia" id="2457">
    <property type="antibodies" value="36 antibodies from 12 providers"/>
</dbReference>
<dbReference type="DNASU" id="79056"/>
<dbReference type="Ensembl" id="ENST00000257836.4">
    <property type="protein sequence ID" value="ENSP00000257836.3"/>
    <property type="gene ID" value="ENSG00000135378.4"/>
</dbReference>
<dbReference type="GeneID" id="79056"/>
<dbReference type="KEGG" id="hsa:79056"/>
<dbReference type="MANE-Select" id="ENST00000257836.4">
    <property type="protein sequence ID" value="ENSP00000257836.3"/>
    <property type="RefSeq nucleotide sequence ID" value="NM_024081.6"/>
    <property type="RefSeq protein sequence ID" value="NP_076986.1"/>
</dbReference>
<dbReference type="UCSC" id="uc001mtx.4">
    <property type="organism name" value="human"/>
</dbReference>
<dbReference type="AGR" id="HGNC:30799"/>
<dbReference type="CTD" id="79056"/>
<dbReference type="DisGeNET" id="79056"/>
<dbReference type="GeneCards" id="PRRG4"/>
<dbReference type="HGNC" id="HGNC:30799">
    <property type="gene designation" value="PRRG4"/>
</dbReference>
<dbReference type="HPA" id="ENSG00000135378">
    <property type="expression patterns" value="Low tissue specificity"/>
</dbReference>
<dbReference type="MIM" id="611690">
    <property type="type" value="gene"/>
</dbReference>
<dbReference type="neXtProt" id="NX_Q9BZD6"/>
<dbReference type="OpenTargets" id="ENSG00000135378"/>
<dbReference type="PharmGKB" id="PA134974592"/>
<dbReference type="VEuPathDB" id="HostDB:ENSG00000135378"/>
<dbReference type="eggNOG" id="ENOG502S0JP">
    <property type="taxonomic scope" value="Eukaryota"/>
</dbReference>
<dbReference type="GeneTree" id="ENSGT00940000158268"/>
<dbReference type="HOGENOM" id="CLU_084796_0_0_1"/>
<dbReference type="InParanoid" id="Q9BZD6"/>
<dbReference type="OMA" id="WKDVFTS"/>
<dbReference type="OrthoDB" id="9945709at2759"/>
<dbReference type="PAN-GO" id="Q9BZD6">
    <property type="GO annotations" value="1 GO annotation based on evolutionary models"/>
</dbReference>
<dbReference type="PhylomeDB" id="Q9BZD6"/>
<dbReference type="TreeFam" id="TF332123"/>
<dbReference type="PathwayCommons" id="Q9BZD6"/>
<dbReference type="SignaLink" id="Q9BZD6"/>
<dbReference type="BioGRID-ORCS" id="79056">
    <property type="hits" value="6 hits in 1131 CRISPR screens"/>
</dbReference>
<dbReference type="GenomeRNAi" id="79056"/>
<dbReference type="Pharos" id="Q9BZD6">
    <property type="development level" value="Tdark"/>
</dbReference>
<dbReference type="PRO" id="PR:Q9BZD6"/>
<dbReference type="Proteomes" id="UP000005640">
    <property type="component" value="Chromosome 11"/>
</dbReference>
<dbReference type="RNAct" id="Q9BZD6">
    <property type="molecule type" value="protein"/>
</dbReference>
<dbReference type="Bgee" id="ENSG00000135378">
    <property type="expression patterns" value="Expressed in gingival epithelium and 162 other cell types or tissues"/>
</dbReference>
<dbReference type="ExpressionAtlas" id="Q9BZD6">
    <property type="expression patterns" value="baseline and differential"/>
</dbReference>
<dbReference type="GO" id="GO:0033116">
    <property type="term" value="C:endoplasmic reticulum-Golgi intermediate compartment membrane"/>
    <property type="evidence" value="ECO:0007669"/>
    <property type="project" value="UniProtKB-SubCell"/>
</dbReference>
<dbReference type="GO" id="GO:0005615">
    <property type="term" value="C:extracellular space"/>
    <property type="evidence" value="ECO:0000318"/>
    <property type="project" value="GO_Central"/>
</dbReference>
<dbReference type="GO" id="GO:0016020">
    <property type="term" value="C:membrane"/>
    <property type="evidence" value="ECO:0000303"/>
    <property type="project" value="UniProtKB"/>
</dbReference>
<dbReference type="GO" id="GO:0005886">
    <property type="term" value="C:plasma membrane"/>
    <property type="evidence" value="ECO:0000314"/>
    <property type="project" value="UniProtKB"/>
</dbReference>
<dbReference type="GO" id="GO:0005509">
    <property type="term" value="F:calcium ion binding"/>
    <property type="evidence" value="ECO:0007669"/>
    <property type="project" value="InterPro"/>
</dbReference>
<dbReference type="GO" id="GO:0004252">
    <property type="term" value="F:serine-type endopeptidase activity"/>
    <property type="evidence" value="ECO:0000318"/>
    <property type="project" value="GO_Central"/>
</dbReference>
<dbReference type="GO" id="GO:0050699">
    <property type="term" value="F:WW domain binding"/>
    <property type="evidence" value="ECO:0000314"/>
    <property type="project" value="UniProtKB"/>
</dbReference>
<dbReference type="GO" id="GO:0007596">
    <property type="term" value="P:blood coagulation"/>
    <property type="evidence" value="ECO:0000318"/>
    <property type="project" value="GO_Central"/>
</dbReference>
<dbReference type="FunFam" id="4.10.740.10:FF:000001">
    <property type="entry name" value="vitamin K-dependent protein S"/>
    <property type="match status" value="1"/>
</dbReference>
<dbReference type="Gene3D" id="4.10.740.10">
    <property type="entry name" value="Coagulation Factor IX"/>
    <property type="match status" value="1"/>
</dbReference>
<dbReference type="InterPro" id="IPR017857">
    <property type="entry name" value="Coagulation_fac-like_Gla_dom"/>
</dbReference>
<dbReference type="InterPro" id="IPR035972">
    <property type="entry name" value="GLA-like_dom_SF"/>
</dbReference>
<dbReference type="InterPro" id="IPR000294">
    <property type="entry name" value="GLA_domain"/>
</dbReference>
<dbReference type="InterPro" id="IPR050442">
    <property type="entry name" value="Peptidase_S1_coag_factors"/>
</dbReference>
<dbReference type="PANTHER" id="PTHR24278">
    <property type="entry name" value="COAGULATION FACTOR"/>
    <property type="match status" value="1"/>
</dbReference>
<dbReference type="PANTHER" id="PTHR24278:SF38">
    <property type="entry name" value="TRANSMEMBRANE GAMMA-CARBOXYGLUTAMIC ACID PROTEIN 4"/>
    <property type="match status" value="1"/>
</dbReference>
<dbReference type="Pfam" id="PF00594">
    <property type="entry name" value="Gla"/>
    <property type="match status" value="1"/>
</dbReference>
<dbReference type="PRINTS" id="PR00001">
    <property type="entry name" value="GLABLOOD"/>
</dbReference>
<dbReference type="SMART" id="SM00069">
    <property type="entry name" value="GLA"/>
    <property type="match status" value="1"/>
</dbReference>
<dbReference type="SUPFAM" id="SSF57630">
    <property type="entry name" value="GLA-domain"/>
    <property type="match status" value="1"/>
</dbReference>
<dbReference type="PROSITE" id="PS00011">
    <property type="entry name" value="GLA_1"/>
    <property type="match status" value="1"/>
</dbReference>
<dbReference type="PROSITE" id="PS50998">
    <property type="entry name" value="GLA_2"/>
    <property type="match status" value="1"/>
</dbReference>
<sequence length="226" mass="25403">MFTLLVLLSQLPTVTLGFPHCARGPKASKHAGEEVFTSKEEANFFIHRRLLYNRFDLELFTPGNLERECNEELCNYEEAREIFVDEDKTIAFWQEYSAKGPTTKSDGNREKIDVMGLLTGLIAAGVFLVIFGLLGYYLCITKCNRLQHPCSSAVYERGRHTPSIIFRRPEEAALSPLPPSVEDAGLPSYEQAVALTRKHSVSPPPPYPGHTKGFRVFKKSMSLPSH</sequence>
<organism>
    <name type="scientific">Homo sapiens</name>
    <name type="common">Human</name>
    <dbReference type="NCBI Taxonomy" id="9606"/>
    <lineage>
        <taxon>Eukaryota</taxon>
        <taxon>Metazoa</taxon>
        <taxon>Chordata</taxon>
        <taxon>Craniata</taxon>
        <taxon>Vertebrata</taxon>
        <taxon>Euteleostomi</taxon>
        <taxon>Mammalia</taxon>
        <taxon>Eutheria</taxon>
        <taxon>Euarchontoglires</taxon>
        <taxon>Primates</taxon>
        <taxon>Haplorrhini</taxon>
        <taxon>Catarrhini</taxon>
        <taxon>Hominidae</taxon>
        <taxon>Homo</taxon>
    </lineage>
</organism>
<proteinExistence type="evidence at protein level"/>
<keyword id="KW-1003">Cell membrane</keyword>
<keyword id="KW-0165">Cleavage on pair of basic residues</keyword>
<keyword id="KW-1015">Disulfide bond</keyword>
<keyword id="KW-0301">Gamma-carboxyglutamic acid</keyword>
<keyword id="KW-0472">Membrane</keyword>
<keyword id="KW-0597">Phosphoprotein</keyword>
<keyword id="KW-1267">Proteomics identification</keyword>
<keyword id="KW-1185">Reference proteome</keyword>
<keyword id="KW-0732">Signal</keyword>
<keyword id="KW-0812">Transmembrane</keyword>
<keyword id="KW-1133">Transmembrane helix</keyword>
<gene>
    <name evidence="6 8" type="primary">PRRG4</name>
    <name type="synonym">PRGP4</name>
    <name type="synonym">TMG4</name>
</gene>
<evidence type="ECO:0000255" key="1"/>
<evidence type="ECO:0000255" key="2">
    <source>
        <dbReference type="PROSITE-ProRule" id="PRU00463"/>
    </source>
</evidence>
<evidence type="ECO:0000269" key="3">
    <source>
    </source>
</evidence>
<evidence type="ECO:0000269" key="4">
    <source>
    </source>
</evidence>
<evidence type="ECO:0000269" key="5">
    <source>
    </source>
</evidence>
<evidence type="ECO:0000303" key="6">
    <source>
    </source>
</evidence>
<evidence type="ECO:0000305" key="7"/>
<evidence type="ECO:0000312" key="8">
    <source>
        <dbReference type="HGNC" id="HGNC:30799"/>
    </source>
</evidence>
<evidence type="ECO:0007744" key="9">
    <source>
    </source>
</evidence>
<reference key="1">
    <citation type="journal article" date="2001" name="Proc. Natl. Acad. Sci. U.S.A.">
        <title>Identification of two novel transmembrane gamma-carboxyglutamic acid proteins expressed broadly in fetal and adult tissues.</title>
        <authorList>
            <person name="Kulman J.D."/>
            <person name="Harris J.E."/>
            <person name="Xie L."/>
            <person name="Davie E.W."/>
        </authorList>
    </citation>
    <scope>NUCLEOTIDE SEQUENCE [MRNA]</scope>
    <scope>TISSUE SPECIFICITY</scope>
</reference>
<reference key="2">
    <citation type="journal article" date="2004" name="Genome Res.">
        <title>The status, quality, and expansion of the NIH full-length cDNA project: the Mammalian Gene Collection (MGC).</title>
        <authorList>
            <consortium name="The MGC Project Team"/>
        </authorList>
    </citation>
    <scope>NUCLEOTIDE SEQUENCE [LARGE SCALE MRNA]</scope>
    <source>
        <tissue>Placenta</tissue>
    </source>
</reference>
<reference key="3">
    <citation type="journal article" date="2014" name="J. Proteomics">
        <title>An enzyme assisted RP-RPLC approach for in-depth analysis of human liver phosphoproteome.</title>
        <authorList>
            <person name="Bian Y."/>
            <person name="Song C."/>
            <person name="Cheng K."/>
            <person name="Dong M."/>
            <person name="Wang F."/>
            <person name="Huang J."/>
            <person name="Sun D."/>
            <person name="Wang L."/>
            <person name="Ye M."/>
            <person name="Zou H."/>
        </authorList>
    </citation>
    <scope>PHOSPHORYLATION [LARGE SCALE ANALYSIS] AT SER-163</scope>
    <scope>IDENTIFICATION BY MASS SPECTROMETRY [LARGE SCALE ANALYSIS]</scope>
    <source>
        <tissue>Liver</tissue>
    </source>
</reference>
<reference key="4">
    <citation type="journal article" date="2017" name="PLoS Genet.">
        <title>The WAGR syndrome gene PRRG4 is a functional homologue of the commissureless axon guidance gene.</title>
        <authorList>
            <person name="Justice E.D."/>
            <person name="Barnum S.J."/>
            <person name="Kidd T."/>
        </authorList>
    </citation>
    <scope>FUNCTION</scope>
    <scope>SUBCELLULAR LOCATION</scope>
</reference>
<reference key="5">
    <citation type="journal article" date="2017" name="PLoS Genet.">
        <authorList>
            <person name="Justice E.D."/>
            <person name="Barnum S.J."/>
            <person name="Kidd T."/>
        </authorList>
    </citation>
    <scope>ERRATUM OF PUBMED:28859078</scope>
</reference>
<reference key="6">
    <citation type="journal article" date="2013" name="J. Biol. Chem.">
        <title>Cellular localization and characterization of cytosolic binding partners for Gla domain-containing proteins PRRG4 and PRRG2.</title>
        <authorList>
            <person name="Yazicioglu M.N."/>
            <person name="Monaldini L."/>
            <person name="Chu K."/>
            <person name="Khazi F.R."/>
            <person name="Murphy S.L."/>
            <person name="Huang H."/>
            <person name="Margaritis P."/>
            <person name="High K.A."/>
        </authorList>
    </citation>
    <scope>INTERACTION WITH MAGI1; MAGI3; NEDD4; NEDD4L; WWTR1 AND YAP1</scope>
    <scope>SUBCELLULAR LOCATION</scope>
    <scope>TISSUE SPECIFICITY</scope>
    <scope>GAMMA-CARBOXYGLUTAMATION</scope>
    <scope>LPXY AND PPXY MOTIFS</scope>
    <scope>MUTAGENESIS OF TYR-189 AND TYR-207</scope>
</reference>
<comment type="function">
    <text evidence="5">May control axon guidance across the CNS (PubMed:28859078). Prevents the delivery of ROBO1 at the cell surface and down-regulates its expression (PubMed:28859078).</text>
</comment>
<comment type="subunit">
    <text evidence="4">Interacts (via cytoplasmic domain) with WW domain-containing proteins MAGI1, MAGI3, NEDD4, NEDD4L, WWTR1/TAZ and YAP1.</text>
</comment>
<comment type="interaction">
    <interactant intactId="EBI-3918643">
        <id>Q9BZD6</id>
    </interactant>
    <interactant intactId="EBI-924464">
        <id>Q96QZ7</id>
        <label>MAGI1</label>
    </interactant>
    <organismsDiffer>false</organismsDiffer>
    <experiments>2</experiments>
</comment>
<comment type="interaction">
    <interactant intactId="EBI-3918643">
        <id>Q9BZD6</id>
    </interactant>
    <interactant intactId="EBI-310506">
        <id>Q5TCQ9</id>
        <label>MAGI3</label>
    </interactant>
    <organismsDiffer>false</organismsDiffer>
    <experiments>2</experiments>
</comment>
<comment type="interaction">
    <interactant intactId="EBI-3918643">
        <id>Q9BZD6</id>
    </interactant>
    <interactant intactId="EBI-726944">
        <id>P46934</id>
        <label>NEDD4</label>
    </interactant>
    <organismsDiffer>false</organismsDiffer>
    <experiments>5</experiments>
</comment>
<comment type="interaction">
    <interactant intactId="EBI-3918643">
        <id>Q9BZD6</id>
    </interactant>
    <interactant intactId="EBI-717962">
        <id>Q96PU5</id>
        <label>NEDD4L</label>
    </interactant>
    <organismsDiffer>false</organismsDiffer>
    <experiments>3</experiments>
</comment>
<comment type="interaction">
    <interactant intactId="EBI-3918643">
        <id>Q9BZD6</id>
    </interactant>
    <interactant intactId="EBI-747743">
        <id>Q9GZV5</id>
        <label>WWTR1</label>
    </interactant>
    <organismsDiffer>false</organismsDiffer>
    <experiments>4</experiments>
</comment>
<comment type="interaction">
    <interactant intactId="EBI-3918643">
        <id>Q9BZD6</id>
    </interactant>
    <interactant intactId="EBI-1044059">
        <id>P46937</id>
        <label>YAP1</label>
    </interactant>
    <organismsDiffer>false</organismsDiffer>
    <experiments>5</experiments>
</comment>
<comment type="interaction">
    <interactant intactId="EBI-3918643">
        <id>Q9BZD6</id>
    </interactant>
    <interactant intactId="EBI-26604877">
        <id>P46937-1</id>
        <label>YAP1</label>
    </interactant>
    <organismsDiffer>false</organismsDiffer>
    <experiments>2</experiments>
</comment>
<comment type="interaction">
    <interactant intactId="EBI-3918643">
        <id>Q9BZD6</id>
    </interactant>
    <interactant intactId="EBI-6558686">
        <id>P46937-3</id>
        <label>YAP1</label>
    </interactant>
    <organismsDiffer>false</organismsDiffer>
    <experiments>3</experiments>
</comment>
<comment type="interaction">
    <interactant intactId="EBI-3918643">
        <id>Q9BZD6</id>
    </interactant>
    <interactant intactId="EBI-7441112">
        <id>Q6RHR9-1</id>
        <label>Magi1</label>
    </interactant>
    <organismsDiffer>true</organismsDiffer>
    <experiments>2</experiments>
</comment>
<comment type="subcellular location">
    <subcellularLocation>
        <location evidence="5">Endoplasmic reticulum-Golgi intermediate compartment membrane</location>
        <topology evidence="1">Single-pass type I membrane protein</topology>
    </subcellularLocation>
    <subcellularLocation>
        <location evidence="4">Cell membrane</location>
        <topology evidence="1">Single-pass type I membrane protein</topology>
    </subcellularLocation>
</comment>
<comment type="tissue specificity">
    <text evidence="3 4">Widely expressed with highest levels in kidney.</text>
</comment>
<comment type="PTM">
    <text evidence="2 4">Gamma-carboxyglutamate residues are formed by vitamin K dependent carboxylation. These residues are essential for the binding of calcium.</text>
</comment>
<comment type="similarity">
    <text evidence="7">Belongs to the commissureless family.</text>
</comment>
<accession>Q9BZD6</accession>
<feature type="signal peptide" evidence="1">
    <location>
        <begin position="1"/>
        <end position="17"/>
    </location>
</feature>
<feature type="propeptide" id="PRO_0000022551" evidence="1">
    <location>
        <begin position="18"/>
        <end position="49"/>
    </location>
</feature>
<feature type="chain" id="PRO_0000022552" description="Transmembrane gamma-carboxyglutamic acid protein 4">
    <location>
        <begin position="50"/>
        <end position="226"/>
    </location>
</feature>
<feature type="topological domain" description="Extracellular" evidence="1">
    <location>
        <begin position="50"/>
        <end position="113"/>
    </location>
</feature>
<feature type="transmembrane region" description="Helical" evidence="1">
    <location>
        <begin position="114"/>
        <end position="134"/>
    </location>
</feature>
<feature type="topological domain" description="Cytoplasmic" evidence="1">
    <location>
        <begin position="135"/>
        <end position="226"/>
    </location>
</feature>
<feature type="domain" description="Gla" evidence="2">
    <location>
        <begin position="52"/>
        <end position="98"/>
    </location>
</feature>
<feature type="short sequence motif" description="LPXY motif; mediates binding to WW domain-containing proteins" evidence="4">
    <location>
        <begin position="186"/>
        <end position="189"/>
    </location>
</feature>
<feature type="short sequence motif" description="PPXY motif; mediates binding to WW domain-containing proteins" evidence="4">
    <location>
        <begin position="204"/>
        <end position="207"/>
    </location>
</feature>
<feature type="modified residue" description="4-carboxyglutamate" evidence="2">
    <location>
        <position position="72"/>
    </location>
</feature>
<feature type="modified residue" description="Phosphoserine" evidence="9">
    <location>
        <position position="163"/>
    </location>
</feature>
<feature type="disulfide bond" evidence="2">
    <location>
        <begin position="69"/>
        <end position="74"/>
    </location>
</feature>
<feature type="sequence variant" id="VAR_051443" description="In dbSNP:rs33962176.">
    <original>E</original>
    <variation>K</variation>
    <location>
        <position position="33"/>
    </location>
</feature>
<feature type="sequence variant" id="VAR_051444" description="In dbSNP:rs34736080.">
    <original>C</original>
    <variation>R</variation>
    <location>
        <position position="143"/>
    </location>
</feature>
<feature type="sequence variant" id="VAR_051445" description="In dbSNP:rs34139105.">
    <original>P</original>
    <variation>Q</variation>
    <location>
        <position position="176"/>
    </location>
</feature>
<feature type="mutagenesis site" description="Reduced binding to MAGI1, MAGI3, NEDD4, NEDD4L, WWTR1 and YAP1." evidence="4">
    <original>Y</original>
    <variation>A</variation>
    <location>
        <position position="189"/>
    </location>
</feature>
<feature type="mutagenesis site" description="Reduced binding to MAGI1. No effect on binding to MAGI3, NEDD4, NEDD4L, WWTR1 or YAP1." evidence="4">
    <original>Y</original>
    <variation>A</variation>
    <location>
        <position position="207"/>
    </location>
</feature>
<protein>
    <recommendedName>
        <fullName evidence="7">Transmembrane gamma-carboxyglutamic acid protein 4</fullName>
    </recommendedName>
    <alternativeName>
        <fullName>Proline-rich gamma-carboxyglutamic acid protein 4</fullName>
        <shortName>Proline-rich Gla protein 4</shortName>
    </alternativeName>
</protein>
<name>TMG4_HUMAN</name>